<proteinExistence type="evidence at transcript level"/>
<keyword id="KW-0963">Cytoplasm</keyword>
<keyword id="KW-0479">Metal-binding</keyword>
<keyword id="KW-0539">Nucleus</keyword>
<keyword id="KW-0597">Phosphoprotein</keyword>
<keyword id="KW-1185">Reference proteome</keyword>
<keyword id="KW-0808">Transferase</keyword>
<keyword id="KW-0833">Ubl conjugation pathway</keyword>
<keyword id="KW-0862">Zinc</keyword>
<keyword id="KW-0863">Zinc-finger</keyword>
<reference key="1">
    <citation type="journal article" date="1993" name="Development">
        <title>Isolation and characterisation of murine homologues of the Drosophila seven in absentia gene (sina).</title>
        <authorList>
            <person name="Della N.G."/>
            <person name="Senior P.V."/>
            <person name="Bowtell D.D.L."/>
        </authorList>
    </citation>
    <scope>NUCLEOTIDE SEQUENCE [MRNA]</scope>
    <scope>TISSUE SPECIFICITY</scope>
    <source>
        <strain>SWR/J</strain>
    </source>
</reference>
<reference key="2">
    <citation type="journal article" date="2004" name="Genome Res.">
        <title>The status, quality, and expansion of the NIH full-length cDNA project: the Mammalian Gene Collection (MGC).</title>
        <authorList>
            <consortium name="The MGC Project Team"/>
        </authorList>
    </citation>
    <scope>NUCLEOTIDE SEQUENCE [LARGE SCALE MRNA]</scope>
    <source>
        <strain>C57BL/6J</strain>
        <tissue>Egg</tissue>
    </source>
</reference>
<reference key="3">
    <citation type="journal article" date="1996" name="Proc. Natl. Acad. Sci. U.S.A.">
        <title>Isolation of 10 differentially expressed cDNAs in p53-induced apoptosis: activation of the vertebrate homologue of the Drosophila seven in absentia gene.</title>
        <authorList>
            <person name="Amson R.B."/>
            <person name="Nemani M."/>
            <person name="Roperch J.-P."/>
            <person name="Israeli D."/>
            <person name="Bougueleret L."/>
            <person name="Le Gall I."/>
            <person name="Medhioub M."/>
            <person name="Linares-Cruz G."/>
            <person name="Lethrosne F."/>
            <person name="Pasturaud P."/>
            <person name="Piouffre L."/>
            <person name="Prieur S."/>
            <person name="Susini L."/>
            <person name="Alvaro V."/>
            <person name="Millasseau P."/>
            <person name="Guidicelli C."/>
            <person name="Bui H."/>
            <person name="Massart C."/>
            <person name="Cazes L."/>
            <person name="Dufour F."/>
            <person name="Bruzzoni-Giovanelli H."/>
            <person name="Owadi H."/>
            <person name="Hennion C."/>
            <person name="Charpak G."/>
            <person name="Dausset J."/>
            <person name="Calvo F."/>
            <person name="Oren M."/>
            <person name="Cohen D."/>
            <person name="Telerman A."/>
        </authorList>
    </citation>
    <scope>INDUCTION</scope>
</reference>
<reference key="4">
    <citation type="journal article" date="2003" name="Am. J. Physiol.">
        <title>Expression of genes involved in vascular development and angiogenesis in endothelial cells of adult lung.</title>
        <authorList>
            <person name="Favre C.J."/>
            <person name="Mancuso M."/>
            <person name="Maas K."/>
            <person name="McLean J.W."/>
            <person name="Baluk P."/>
            <person name="McDonald D.M."/>
        </authorList>
    </citation>
    <scope>TISSUE SPECIFICITY</scope>
</reference>
<reference key="5">
    <citation type="journal article" date="2004" name="Proc. Natl. Acad. Sci. U.S.A.">
        <title>Siah-1b is a direct transcriptional target of p53: identification of the functional p53 responsive element in the siah-1b promoter.</title>
        <authorList>
            <person name="Fiucci G."/>
            <person name="Beaucourt S."/>
            <person name="Duflaut D."/>
            <person name="Lespagnol A."/>
            <person name="Stumptner-Cuvelette P."/>
            <person name="Geant A."/>
            <person name="Buchwalter G."/>
            <person name="Tuynder M."/>
            <person name="Susini L."/>
            <person name="Lassalle J.-M."/>
            <person name="Wasylyk C."/>
            <person name="Wasylyk B."/>
            <person name="Oren M."/>
            <person name="Amson R."/>
            <person name="Telerman A."/>
        </authorList>
    </citation>
    <scope>INDUCTION</scope>
</reference>
<sequence>MSRQAATALSTGTSKCPPSQRVPALTDTTASNNDLASLFECPVCFDYVLPPILQCQSGHLVCSNCRPKLTCCPTCRGPLGSIRNLAVEKVANSVLFPCKYSASGCEITLPHTKKAEHEELCEFRPYSCPCPGASCKWQGSLDAVMPHLMHQHKSITTLQGEDIVFLATDINLPGAVDWVMMQSCFGFHFMLVLEKQEKYDGHQQFFAIVQLIGTRKQAENFAYRLELNGHRRRLTWEATPRSIHEGIATAIMNSDCLVFDTSIAQLFAENGNLGINVTISMC</sequence>
<accession>Q06985</accession>
<accession>Q7TPV6</accession>
<comment type="function">
    <text evidence="3 4">E3 ubiquitin-protein ligase that mediates ubiquitination and subsequent proteasomal degradation of target proteins. E3 ubiquitin ligases accept ubiquitin from an E2 ubiquitin-conjugating enzyme in the form of a thioester and then directly transfers the ubiquitin to targeted substrates. Mediates E3 ubiquitin ligase activity either through direct binding to substrates or by functioning as the essential RING domain subunit of larger E3 complexes.</text>
</comment>
<comment type="catalytic activity">
    <reaction evidence="3">
        <text>S-ubiquitinyl-[E2 ubiquitin-conjugating enzyme]-L-cysteine + [acceptor protein]-L-lysine = [E2 ubiquitin-conjugating enzyme]-L-cysteine + N(6)-ubiquitinyl-[acceptor protein]-L-lysine.</text>
        <dbReference type="EC" id="2.3.2.27"/>
    </reaction>
</comment>
<comment type="pathway">
    <text evidence="3">Protein modification; protein ubiquitination.</text>
</comment>
<comment type="subunit">
    <text evidence="2">Homodimer.</text>
</comment>
<comment type="subcellular location">
    <subcellularLocation>
        <location evidence="1">Cytoplasm</location>
    </subcellularLocation>
    <subcellularLocation>
        <location evidence="1">Nucleus</location>
    </subcellularLocation>
    <text evidence="1">Predominantly cytoplasmic. Partially nuclear.</text>
</comment>
<comment type="tissue specificity">
    <text evidence="8 10">Widely expressed at low level in embryos and adults. Due to the high similarity between SIAH1A and SIAH1B, it is difficult to distinguish its own tissue specificity. Overexpressed in endothelial cells of adult lung.</text>
</comment>
<comment type="induction">
    <text evidence="9 11">Induced by p53/TP53, suggesting that it may be required to modulate p53/TP53 response.</text>
</comment>
<comment type="domain">
    <text>The RING-type zinc finger domain is essential for ubiquitin ligase activity.</text>
</comment>
<comment type="domain">
    <text evidence="2">The SBD domain (substrate-binding domain) mediates the homodimerization and the interaction with substrate proteins. It is related to the TRAF family.</text>
</comment>
<comment type="PTM">
    <text evidence="3">Phosphorylated on Ser-19 by ATM and ATR.</text>
</comment>
<comment type="similarity">
    <text evidence="12">Belongs to the SINA (Seven in absentia) family.</text>
</comment>
<name>SIA1B_MOUSE</name>
<protein>
    <recommendedName>
        <fullName>E3 ubiquitin-protein ligase SIAH1B</fullName>
        <ecNumber evidence="3">2.3.2.27</ecNumber>
    </recommendedName>
    <alternativeName>
        <fullName evidence="12">RING-type E3 ubiquitin transferase SIAH1B</fullName>
    </alternativeName>
    <alternativeName>
        <fullName>Seven in absentia homolog 1b</fullName>
        <shortName>Siah-1b</shortName>
        <shortName>Siah1b</shortName>
    </alternativeName>
</protein>
<evidence type="ECO:0000250" key="1"/>
<evidence type="ECO:0000250" key="2">
    <source>
        <dbReference type="UniProtKB" id="P61092"/>
    </source>
</evidence>
<evidence type="ECO:0000250" key="3">
    <source>
        <dbReference type="UniProtKB" id="Q8IUQ4"/>
    </source>
</evidence>
<evidence type="ECO:0000250" key="4">
    <source>
        <dbReference type="UniProtKB" id="Q920M9"/>
    </source>
</evidence>
<evidence type="ECO:0000255" key="5">
    <source>
        <dbReference type="PROSITE-ProRule" id="PRU00175"/>
    </source>
</evidence>
<evidence type="ECO:0000255" key="6">
    <source>
        <dbReference type="PROSITE-ProRule" id="PRU00455"/>
    </source>
</evidence>
<evidence type="ECO:0000256" key="7">
    <source>
        <dbReference type="SAM" id="MobiDB-lite"/>
    </source>
</evidence>
<evidence type="ECO:0000269" key="8">
    <source>
    </source>
</evidence>
<evidence type="ECO:0000269" key="9">
    <source>
    </source>
</evidence>
<evidence type="ECO:0000269" key="10">
    <source>
    </source>
</evidence>
<evidence type="ECO:0000269" key="11">
    <source>
    </source>
</evidence>
<evidence type="ECO:0000305" key="12"/>
<dbReference type="EC" id="2.3.2.27" evidence="3"/>
<dbReference type="EMBL" id="Z19580">
    <property type="protein sequence ID" value="CAA79631.1"/>
    <property type="molecule type" value="mRNA"/>
</dbReference>
<dbReference type="EMBL" id="BC052887">
    <property type="protein sequence ID" value="AAH52887.1"/>
    <property type="molecule type" value="mRNA"/>
</dbReference>
<dbReference type="CCDS" id="CCDS30516.1"/>
<dbReference type="PIR" id="I48764">
    <property type="entry name" value="S35754"/>
</dbReference>
<dbReference type="RefSeq" id="NP_001295314.1">
    <property type="nucleotide sequence ID" value="NM_001308385.1"/>
</dbReference>
<dbReference type="RefSeq" id="NP_001295315.1">
    <property type="nucleotide sequence ID" value="NM_001308386.1"/>
</dbReference>
<dbReference type="RefSeq" id="NP_033199.1">
    <property type="nucleotide sequence ID" value="NM_009173.2"/>
</dbReference>
<dbReference type="SMR" id="Q06985"/>
<dbReference type="BioGRID" id="203232">
    <property type="interactions" value="1"/>
</dbReference>
<dbReference type="FunCoup" id="Q06985">
    <property type="interactions" value="718"/>
</dbReference>
<dbReference type="IntAct" id="Q06985">
    <property type="interactions" value="1"/>
</dbReference>
<dbReference type="STRING" id="10090.ENSMUSP00000043215"/>
<dbReference type="PaxDb" id="10090-ENSMUSP00000043215"/>
<dbReference type="ProteomicsDB" id="261230"/>
<dbReference type="DNASU" id="20438"/>
<dbReference type="GeneID" id="20438"/>
<dbReference type="KEGG" id="mmu:20438"/>
<dbReference type="AGR" id="MGI:108063"/>
<dbReference type="CTD" id="20438"/>
<dbReference type="MGI" id="MGI:108063">
    <property type="gene designation" value="Siah1b"/>
</dbReference>
<dbReference type="eggNOG" id="KOG3002">
    <property type="taxonomic scope" value="Eukaryota"/>
</dbReference>
<dbReference type="InParanoid" id="Q06985"/>
<dbReference type="OrthoDB" id="941555at2759"/>
<dbReference type="PhylomeDB" id="Q06985"/>
<dbReference type="UniPathway" id="UPA00143"/>
<dbReference type="BioGRID-ORCS" id="20438">
    <property type="hits" value="3 hits in 80 CRISPR screens"/>
</dbReference>
<dbReference type="ChiTaRS" id="Siah1b">
    <property type="organism name" value="mouse"/>
</dbReference>
<dbReference type="PRO" id="PR:Q06985"/>
<dbReference type="Proteomes" id="UP000000589">
    <property type="component" value="Unplaced"/>
</dbReference>
<dbReference type="RNAct" id="Q06985">
    <property type="molecule type" value="protein"/>
</dbReference>
<dbReference type="GO" id="GO:0005829">
    <property type="term" value="C:cytosol"/>
    <property type="evidence" value="ECO:0000250"/>
    <property type="project" value="UniProtKB"/>
</dbReference>
<dbReference type="GO" id="GO:0005634">
    <property type="term" value="C:nucleus"/>
    <property type="evidence" value="ECO:0000250"/>
    <property type="project" value="UniProtKB"/>
</dbReference>
<dbReference type="GO" id="GO:0061630">
    <property type="term" value="F:ubiquitin protein ligase activity"/>
    <property type="evidence" value="ECO:0000304"/>
    <property type="project" value="MGI"/>
</dbReference>
<dbReference type="GO" id="GO:0004842">
    <property type="term" value="F:ubiquitin-protein transferase activity"/>
    <property type="evidence" value="ECO:0000250"/>
    <property type="project" value="UniProtKB"/>
</dbReference>
<dbReference type="GO" id="GO:0008270">
    <property type="term" value="F:zinc ion binding"/>
    <property type="evidence" value="ECO:0000250"/>
    <property type="project" value="UniProtKB"/>
</dbReference>
<dbReference type="GO" id="GO:0051402">
    <property type="term" value="P:neuron apoptotic process"/>
    <property type="evidence" value="ECO:0000250"/>
    <property type="project" value="UniProtKB"/>
</dbReference>
<dbReference type="GO" id="GO:0043161">
    <property type="term" value="P:proteasome-mediated ubiquitin-dependent protein catabolic process"/>
    <property type="evidence" value="ECO:0000250"/>
    <property type="project" value="UniProtKB"/>
</dbReference>
<dbReference type="GO" id="GO:0016567">
    <property type="term" value="P:protein ubiquitination"/>
    <property type="evidence" value="ECO:0007669"/>
    <property type="project" value="UniProtKB-UniPathway"/>
</dbReference>
<dbReference type="GO" id="GO:0006511">
    <property type="term" value="P:ubiquitin-dependent protein catabolic process"/>
    <property type="evidence" value="ECO:0000250"/>
    <property type="project" value="UniProtKB"/>
</dbReference>
<dbReference type="CDD" id="cd03829">
    <property type="entry name" value="Sina"/>
    <property type="match status" value="1"/>
</dbReference>
<dbReference type="FunFam" id="2.60.210.10:FF:000002">
    <property type="entry name" value="E3 ubiquitin-protein ligase"/>
    <property type="match status" value="1"/>
</dbReference>
<dbReference type="FunFam" id="3.30.160.60:FF:000665">
    <property type="entry name" value="E3 ubiquitin-protein ligase"/>
    <property type="match status" value="1"/>
</dbReference>
<dbReference type="FunFam" id="3.30.40.10:FF:000050">
    <property type="entry name" value="E3 ubiquitin-protein ligase"/>
    <property type="match status" value="1"/>
</dbReference>
<dbReference type="FunFam" id="3.30.40.10:FF:000063">
    <property type="entry name" value="E3 ubiquitin-protein ligase"/>
    <property type="match status" value="1"/>
</dbReference>
<dbReference type="Gene3D" id="2.60.210.10">
    <property type="entry name" value="Apoptosis, Tumor Necrosis Factor Receptor Associated Protein 2, Chain A"/>
    <property type="match status" value="1"/>
</dbReference>
<dbReference type="Gene3D" id="3.30.40.10">
    <property type="entry name" value="Zinc/RING finger domain, C3HC4 (zinc finger)"/>
    <property type="match status" value="2"/>
</dbReference>
<dbReference type="InterPro" id="IPR018121">
    <property type="entry name" value="7-in-absentia-prot_TRAF-dom"/>
</dbReference>
<dbReference type="InterPro" id="IPR004162">
    <property type="entry name" value="SINA-like_animal"/>
</dbReference>
<dbReference type="InterPro" id="IPR049548">
    <property type="entry name" value="Sina-like_RING"/>
</dbReference>
<dbReference type="InterPro" id="IPR008974">
    <property type="entry name" value="TRAF-like"/>
</dbReference>
<dbReference type="InterPro" id="IPR001841">
    <property type="entry name" value="Znf_RING"/>
</dbReference>
<dbReference type="InterPro" id="IPR013083">
    <property type="entry name" value="Znf_RING/FYVE/PHD"/>
</dbReference>
<dbReference type="InterPro" id="IPR013010">
    <property type="entry name" value="Znf_SIAH"/>
</dbReference>
<dbReference type="PANTHER" id="PTHR45877:SF7">
    <property type="entry name" value="E3 UBIQUITIN-PROTEIN LIGASE SIAH1"/>
    <property type="match status" value="1"/>
</dbReference>
<dbReference type="PANTHER" id="PTHR45877">
    <property type="entry name" value="E3 UBIQUITIN-PROTEIN LIGASE SIAH2"/>
    <property type="match status" value="1"/>
</dbReference>
<dbReference type="Pfam" id="PF21362">
    <property type="entry name" value="Sina_RING"/>
    <property type="match status" value="1"/>
</dbReference>
<dbReference type="Pfam" id="PF03145">
    <property type="entry name" value="Sina_TRAF"/>
    <property type="match status" value="1"/>
</dbReference>
<dbReference type="Pfam" id="PF21361">
    <property type="entry name" value="Sina_ZnF"/>
    <property type="match status" value="1"/>
</dbReference>
<dbReference type="SUPFAM" id="SSF57850">
    <property type="entry name" value="RING/U-box"/>
    <property type="match status" value="1"/>
</dbReference>
<dbReference type="SUPFAM" id="SSF49599">
    <property type="entry name" value="TRAF domain-like"/>
    <property type="match status" value="1"/>
</dbReference>
<dbReference type="PROSITE" id="PS50089">
    <property type="entry name" value="ZF_RING_2"/>
    <property type="match status" value="1"/>
</dbReference>
<dbReference type="PROSITE" id="PS51081">
    <property type="entry name" value="ZF_SIAH"/>
    <property type="match status" value="1"/>
</dbReference>
<feature type="chain" id="PRO_0000056165" description="E3 ubiquitin-protein ligase SIAH1B">
    <location>
        <begin position="1"/>
        <end position="282"/>
    </location>
</feature>
<feature type="zinc finger region" description="RING-type" evidence="5">
    <location>
        <begin position="41"/>
        <end position="76"/>
    </location>
</feature>
<feature type="zinc finger region" description="SIAH-type" evidence="6">
    <location>
        <begin position="93"/>
        <end position="153"/>
    </location>
</feature>
<feature type="region of interest" description="Disordered" evidence="7">
    <location>
        <begin position="1"/>
        <end position="23"/>
    </location>
</feature>
<feature type="region of interest" description="SBD" evidence="2">
    <location>
        <begin position="90"/>
        <end position="282"/>
    </location>
</feature>
<feature type="compositionally biased region" description="Polar residues" evidence="7">
    <location>
        <begin position="1"/>
        <end position="17"/>
    </location>
</feature>
<feature type="binding site" evidence="2">
    <location>
        <position position="98"/>
    </location>
    <ligand>
        <name>Zn(2+)</name>
        <dbReference type="ChEBI" id="CHEBI:29105"/>
        <label>1</label>
    </ligand>
</feature>
<feature type="binding site" evidence="2">
    <location>
        <position position="105"/>
    </location>
    <ligand>
        <name>Zn(2+)</name>
        <dbReference type="ChEBI" id="CHEBI:29105"/>
        <label>1</label>
    </ligand>
</feature>
<feature type="binding site" evidence="2">
    <location>
        <position position="117"/>
    </location>
    <ligand>
        <name>Zn(2+)</name>
        <dbReference type="ChEBI" id="CHEBI:29105"/>
        <label>1</label>
    </ligand>
</feature>
<feature type="binding site" evidence="2">
    <location>
        <position position="121"/>
    </location>
    <ligand>
        <name>Zn(2+)</name>
        <dbReference type="ChEBI" id="CHEBI:29105"/>
        <label>1</label>
    </ligand>
</feature>
<feature type="binding site" evidence="2">
    <location>
        <position position="128"/>
    </location>
    <ligand>
        <name>Zn(2+)</name>
        <dbReference type="ChEBI" id="CHEBI:29105"/>
        <label>2</label>
    </ligand>
</feature>
<feature type="binding site" evidence="2">
    <location>
        <position position="135"/>
    </location>
    <ligand>
        <name>Zn(2+)</name>
        <dbReference type="ChEBI" id="CHEBI:29105"/>
        <label>2</label>
    </ligand>
</feature>
<feature type="binding site" evidence="2">
    <location>
        <position position="147"/>
    </location>
    <ligand>
        <name>Zn(2+)</name>
        <dbReference type="ChEBI" id="CHEBI:29105"/>
        <label>2</label>
    </ligand>
</feature>
<feature type="binding site" evidence="2">
    <location>
        <position position="152"/>
    </location>
    <ligand>
        <name>Zn(2+)</name>
        <dbReference type="ChEBI" id="CHEBI:29105"/>
        <label>2</label>
    </ligand>
</feature>
<feature type="modified residue" description="Phosphoserine; by ATM and ATR" evidence="3">
    <location>
        <position position="19"/>
    </location>
</feature>
<feature type="sequence conflict" description="In Ref. 1; CAA79631." evidence="12" ref="1">
    <original>V</original>
    <variation>M</variation>
    <location>
        <position position="87"/>
    </location>
</feature>
<organism>
    <name type="scientific">Mus musculus</name>
    <name type="common">Mouse</name>
    <dbReference type="NCBI Taxonomy" id="10090"/>
    <lineage>
        <taxon>Eukaryota</taxon>
        <taxon>Metazoa</taxon>
        <taxon>Chordata</taxon>
        <taxon>Craniata</taxon>
        <taxon>Vertebrata</taxon>
        <taxon>Euteleostomi</taxon>
        <taxon>Mammalia</taxon>
        <taxon>Eutheria</taxon>
        <taxon>Euarchontoglires</taxon>
        <taxon>Glires</taxon>
        <taxon>Rodentia</taxon>
        <taxon>Myomorpha</taxon>
        <taxon>Muroidea</taxon>
        <taxon>Muridae</taxon>
        <taxon>Murinae</taxon>
        <taxon>Mus</taxon>
        <taxon>Mus</taxon>
    </lineage>
</organism>
<gene>
    <name type="primary">Siah1b</name>
</gene>